<protein>
    <recommendedName>
        <fullName evidence="1">Threonine--tRNA ligase</fullName>
        <ecNumber evidence="1">6.1.1.3</ecNumber>
    </recommendedName>
    <alternativeName>
        <fullName evidence="1">Threonyl-tRNA synthetase</fullName>
        <shortName evidence="1">ThrRS</shortName>
    </alternativeName>
</protein>
<sequence length="642" mass="73655">MPVITLPDGSQRHYDHAVSVLDVALDIGPGLAKACIAGRVNGELVDASDLIESDAQLAIITAKDAEGLEILRHSCAHLLGHAIKQLWPDTKMAIGPVIDNGFYYDVDIEHTLTQEDLALLEKRMHELADKDYDVIKKKVSWQEARDTFAARGEDYKVAILDENISRDDRPGLYHHEEYVDMCRGPHVPNMRFCHHFKLQKTSGAYWRGDSKNKMLQRIYGTAWGDKKQLNAYLQRLEEAAKRDHRKIGKQLDLYHMQEEAPGMVFWHNDGWTIFRELETFVRMKLKEYQYQEVKGPFMMDRVLWEKTGHWENYAEHMFTTSSENREYCIKPMNCPGHVQIFNQGLKSYRDLPLRMAEFGSCHRNEPSGALHGLMRVRGFTQDDAHVFCTEEQVRDEVNSCIKMVYDMYSTFGFEKIVVKLSTRPEKRIGSDELWTRAEDDLAAALTENGIPFDYQPGEGAFYGPKIEFTLHDCLDRAWQCGTVQLDFSLPGRLSASYIGENNDRQVPVMIHRAILGSMERFIGILTEEYAGFFPTWLAPVQVVVMNITDSQSDYVQQVTKKLQDAGIRAKADLRNEKIGFKIREHTLRRVPYMLVCGDKEVESGKIAVRTRRGKDLGSLDVNVVVDQLLAEIRSRSLHQLEE</sequence>
<feature type="chain" id="PRO_1000058431" description="Threonine--tRNA ligase">
    <location>
        <begin position="1"/>
        <end position="642"/>
    </location>
</feature>
<feature type="domain" description="TGS" evidence="2">
    <location>
        <begin position="1"/>
        <end position="61"/>
    </location>
</feature>
<feature type="region of interest" description="Catalytic" evidence="1">
    <location>
        <begin position="243"/>
        <end position="534"/>
    </location>
</feature>
<feature type="binding site" evidence="1">
    <location>
        <position position="334"/>
    </location>
    <ligand>
        <name>Zn(2+)</name>
        <dbReference type="ChEBI" id="CHEBI:29105"/>
    </ligand>
</feature>
<feature type="binding site" evidence="1">
    <location>
        <position position="385"/>
    </location>
    <ligand>
        <name>Zn(2+)</name>
        <dbReference type="ChEBI" id="CHEBI:29105"/>
    </ligand>
</feature>
<feature type="binding site" evidence="1">
    <location>
        <position position="511"/>
    </location>
    <ligand>
        <name>Zn(2+)</name>
        <dbReference type="ChEBI" id="CHEBI:29105"/>
    </ligand>
</feature>
<proteinExistence type="inferred from homology"/>
<organism>
    <name type="scientific">Yersinia pseudotuberculosis serotype O:1b (strain IP 31758)</name>
    <dbReference type="NCBI Taxonomy" id="349747"/>
    <lineage>
        <taxon>Bacteria</taxon>
        <taxon>Pseudomonadati</taxon>
        <taxon>Pseudomonadota</taxon>
        <taxon>Gammaproteobacteria</taxon>
        <taxon>Enterobacterales</taxon>
        <taxon>Yersiniaceae</taxon>
        <taxon>Yersinia</taxon>
    </lineage>
</organism>
<name>SYT_YERP3</name>
<comment type="function">
    <text evidence="1">Catalyzes the attachment of threonine to tRNA(Thr) in a two-step reaction: L-threonine is first activated by ATP to form Thr-AMP and then transferred to the acceptor end of tRNA(Thr). Also edits incorrectly charged L-seryl-tRNA(Thr).</text>
</comment>
<comment type="catalytic activity">
    <reaction evidence="1">
        <text>tRNA(Thr) + L-threonine + ATP = L-threonyl-tRNA(Thr) + AMP + diphosphate + H(+)</text>
        <dbReference type="Rhea" id="RHEA:24624"/>
        <dbReference type="Rhea" id="RHEA-COMP:9670"/>
        <dbReference type="Rhea" id="RHEA-COMP:9704"/>
        <dbReference type="ChEBI" id="CHEBI:15378"/>
        <dbReference type="ChEBI" id="CHEBI:30616"/>
        <dbReference type="ChEBI" id="CHEBI:33019"/>
        <dbReference type="ChEBI" id="CHEBI:57926"/>
        <dbReference type="ChEBI" id="CHEBI:78442"/>
        <dbReference type="ChEBI" id="CHEBI:78534"/>
        <dbReference type="ChEBI" id="CHEBI:456215"/>
        <dbReference type="EC" id="6.1.1.3"/>
    </reaction>
</comment>
<comment type="cofactor">
    <cofactor evidence="1">
        <name>Zn(2+)</name>
        <dbReference type="ChEBI" id="CHEBI:29105"/>
    </cofactor>
    <text evidence="1">Binds 1 zinc ion per subunit.</text>
</comment>
<comment type="subunit">
    <text evidence="1">Homodimer.</text>
</comment>
<comment type="subcellular location">
    <subcellularLocation>
        <location evidence="1">Cytoplasm</location>
    </subcellularLocation>
</comment>
<comment type="similarity">
    <text evidence="1">Belongs to the class-II aminoacyl-tRNA synthetase family.</text>
</comment>
<reference key="1">
    <citation type="journal article" date="2007" name="PLoS Genet.">
        <title>The complete genome sequence of Yersinia pseudotuberculosis IP31758, the causative agent of Far East scarlet-like fever.</title>
        <authorList>
            <person name="Eppinger M."/>
            <person name="Rosovitz M.J."/>
            <person name="Fricke W.F."/>
            <person name="Rasko D.A."/>
            <person name="Kokorina G."/>
            <person name="Fayolle C."/>
            <person name="Lindler L.E."/>
            <person name="Carniel E."/>
            <person name="Ravel J."/>
        </authorList>
    </citation>
    <scope>NUCLEOTIDE SEQUENCE [LARGE SCALE GENOMIC DNA]</scope>
    <source>
        <strain>IP 31758</strain>
    </source>
</reference>
<dbReference type="EC" id="6.1.1.3" evidence="1"/>
<dbReference type="EMBL" id="CP000720">
    <property type="protein sequence ID" value="ABS49189.1"/>
    <property type="molecule type" value="Genomic_DNA"/>
</dbReference>
<dbReference type="RefSeq" id="WP_002211836.1">
    <property type="nucleotide sequence ID" value="NC_009708.1"/>
</dbReference>
<dbReference type="SMR" id="A7FHG1"/>
<dbReference type="GeneID" id="57976245"/>
<dbReference type="KEGG" id="ypi:YpsIP31758_1712"/>
<dbReference type="HOGENOM" id="CLU_008554_0_1_6"/>
<dbReference type="Proteomes" id="UP000002412">
    <property type="component" value="Chromosome"/>
</dbReference>
<dbReference type="GO" id="GO:0005829">
    <property type="term" value="C:cytosol"/>
    <property type="evidence" value="ECO:0007669"/>
    <property type="project" value="TreeGrafter"/>
</dbReference>
<dbReference type="GO" id="GO:0005524">
    <property type="term" value="F:ATP binding"/>
    <property type="evidence" value="ECO:0007669"/>
    <property type="project" value="UniProtKB-UniRule"/>
</dbReference>
<dbReference type="GO" id="GO:0046872">
    <property type="term" value="F:metal ion binding"/>
    <property type="evidence" value="ECO:0007669"/>
    <property type="project" value="UniProtKB-KW"/>
</dbReference>
<dbReference type="GO" id="GO:0004829">
    <property type="term" value="F:threonine-tRNA ligase activity"/>
    <property type="evidence" value="ECO:0007669"/>
    <property type="project" value="UniProtKB-UniRule"/>
</dbReference>
<dbReference type="GO" id="GO:0000049">
    <property type="term" value="F:tRNA binding"/>
    <property type="evidence" value="ECO:0007669"/>
    <property type="project" value="UniProtKB-KW"/>
</dbReference>
<dbReference type="GO" id="GO:0006435">
    <property type="term" value="P:threonyl-tRNA aminoacylation"/>
    <property type="evidence" value="ECO:0007669"/>
    <property type="project" value="UniProtKB-UniRule"/>
</dbReference>
<dbReference type="CDD" id="cd01667">
    <property type="entry name" value="TGS_ThrRS"/>
    <property type="match status" value="1"/>
</dbReference>
<dbReference type="CDD" id="cd00860">
    <property type="entry name" value="ThrRS_anticodon"/>
    <property type="match status" value="1"/>
</dbReference>
<dbReference type="CDD" id="cd00771">
    <property type="entry name" value="ThrRS_core"/>
    <property type="match status" value="1"/>
</dbReference>
<dbReference type="FunFam" id="3.10.20.30:FF:000005">
    <property type="entry name" value="Threonine--tRNA ligase"/>
    <property type="match status" value="1"/>
</dbReference>
<dbReference type="FunFam" id="3.30.54.20:FF:000002">
    <property type="entry name" value="Threonine--tRNA ligase"/>
    <property type="match status" value="1"/>
</dbReference>
<dbReference type="FunFam" id="3.30.930.10:FF:000002">
    <property type="entry name" value="Threonine--tRNA ligase"/>
    <property type="match status" value="1"/>
</dbReference>
<dbReference type="FunFam" id="3.40.50.800:FF:000001">
    <property type="entry name" value="Threonine--tRNA ligase"/>
    <property type="match status" value="1"/>
</dbReference>
<dbReference type="FunFam" id="3.30.980.10:FF:000005">
    <property type="entry name" value="Threonyl-tRNA synthetase, mitochondrial"/>
    <property type="match status" value="1"/>
</dbReference>
<dbReference type="Gene3D" id="3.10.20.30">
    <property type="match status" value="1"/>
</dbReference>
<dbReference type="Gene3D" id="3.30.54.20">
    <property type="match status" value="1"/>
</dbReference>
<dbReference type="Gene3D" id="3.40.50.800">
    <property type="entry name" value="Anticodon-binding domain"/>
    <property type="match status" value="1"/>
</dbReference>
<dbReference type="Gene3D" id="3.30.930.10">
    <property type="entry name" value="Bira Bifunctional Protein, Domain 2"/>
    <property type="match status" value="1"/>
</dbReference>
<dbReference type="Gene3D" id="3.30.980.10">
    <property type="entry name" value="Threonyl-trna Synthetase, Chain A, domain 2"/>
    <property type="match status" value="1"/>
</dbReference>
<dbReference type="HAMAP" id="MF_00184">
    <property type="entry name" value="Thr_tRNA_synth"/>
    <property type="match status" value="1"/>
</dbReference>
<dbReference type="InterPro" id="IPR002314">
    <property type="entry name" value="aa-tRNA-synt_IIb"/>
</dbReference>
<dbReference type="InterPro" id="IPR006195">
    <property type="entry name" value="aa-tRNA-synth_II"/>
</dbReference>
<dbReference type="InterPro" id="IPR045864">
    <property type="entry name" value="aa-tRNA-synth_II/BPL/LPL"/>
</dbReference>
<dbReference type="InterPro" id="IPR004154">
    <property type="entry name" value="Anticodon-bd"/>
</dbReference>
<dbReference type="InterPro" id="IPR036621">
    <property type="entry name" value="Anticodon-bd_dom_sf"/>
</dbReference>
<dbReference type="InterPro" id="IPR012675">
    <property type="entry name" value="Beta-grasp_dom_sf"/>
</dbReference>
<dbReference type="InterPro" id="IPR004095">
    <property type="entry name" value="TGS"/>
</dbReference>
<dbReference type="InterPro" id="IPR012676">
    <property type="entry name" value="TGS-like"/>
</dbReference>
<dbReference type="InterPro" id="IPR002320">
    <property type="entry name" value="Thr-tRNA-ligase_IIa"/>
</dbReference>
<dbReference type="InterPro" id="IPR018163">
    <property type="entry name" value="Thr/Ala-tRNA-synth_IIc_edit"/>
</dbReference>
<dbReference type="InterPro" id="IPR047246">
    <property type="entry name" value="ThrRS_anticodon"/>
</dbReference>
<dbReference type="InterPro" id="IPR033728">
    <property type="entry name" value="ThrRS_core"/>
</dbReference>
<dbReference type="InterPro" id="IPR012947">
    <property type="entry name" value="tRNA_SAD"/>
</dbReference>
<dbReference type="NCBIfam" id="TIGR00418">
    <property type="entry name" value="thrS"/>
    <property type="match status" value="1"/>
</dbReference>
<dbReference type="PANTHER" id="PTHR11451:SF44">
    <property type="entry name" value="THREONINE--TRNA LIGASE, CHLOROPLASTIC_MITOCHONDRIAL 2"/>
    <property type="match status" value="1"/>
</dbReference>
<dbReference type="PANTHER" id="PTHR11451">
    <property type="entry name" value="THREONINE-TRNA LIGASE"/>
    <property type="match status" value="1"/>
</dbReference>
<dbReference type="Pfam" id="PF03129">
    <property type="entry name" value="HGTP_anticodon"/>
    <property type="match status" value="1"/>
</dbReference>
<dbReference type="Pfam" id="PF02824">
    <property type="entry name" value="TGS"/>
    <property type="match status" value="1"/>
</dbReference>
<dbReference type="Pfam" id="PF00587">
    <property type="entry name" value="tRNA-synt_2b"/>
    <property type="match status" value="1"/>
</dbReference>
<dbReference type="Pfam" id="PF07973">
    <property type="entry name" value="tRNA_SAD"/>
    <property type="match status" value="1"/>
</dbReference>
<dbReference type="PRINTS" id="PR01047">
    <property type="entry name" value="TRNASYNTHTHR"/>
</dbReference>
<dbReference type="SMART" id="SM00863">
    <property type="entry name" value="tRNA_SAD"/>
    <property type="match status" value="1"/>
</dbReference>
<dbReference type="SUPFAM" id="SSF52954">
    <property type="entry name" value="Class II aaRS ABD-related"/>
    <property type="match status" value="1"/>
</dbReference>
<dbReference type="SUPFAM" id="SSF55681">
    <property type="entry name" value="Class II aaRS and biotin synthetases"/>
    <property type="match status" value="1"/>
</dbReference>
<dbReference type="SUPFAM" id="SSF81271">
    <property type="entry name" value="TGS-like"/>
    <property type="match status" value="1"/>
</dbReference>
<dbReference type="SUPFAM" id="SSF55186">
    <property type="entry name" value="ThrRS/AlaRS common domain"/>
    <property type="match status" value="1"/>
</dbReference>
<dbReference type="PROSITE" id="PS50862">
    <property type="entry name" value="AA_TRNA_LIGASE_II"/>
    <property type="match status" value="1"/>
</dbReference>
<dbReference type="PROSITE" id="PS51880">
    <property type="entry name" value="TGS"/>
    <property type="match status" value="1"/>
</dbReference>
<gene>
    <name evidence="1" type="primary">thrS</name>
    <name type="ordered locus">YpsIP31758_1712</name>
</gene>
<evidence type="ECO:0000255" key="1">
    <source>
        <dbReference type="HAMAP-Rule" id="MF_00184"/>
    </source>
</evidence>
<evidence type="ECO:0000255" key="2">
    <source>
        <dbReference type="PROSITE-ProRule" id="PRU01228"/>
    </source>
</evidence>
<accession>A7FHG1</accession>
<keyword id="KW-0030">Aminoacyl-tRNA synthetase</keyword>
<keyword id="KW-0067">ATP-binding</keyword>
<keyword id="KW-0963">Cytoplasm</keyword>
<keyword id="KW-0436">Ligase</keyword>
<keyword id="KW-0479">Metal-binding</keyword>
<keyword id="KW-0547">Nucleotide-binding</keyword>
<keyword id="KW-0648">Protein biosynthesis</keyword>
<keyword id="KW-0694">RNA-binding</keyword>
<keyword id="KW-0820">tRNA-binding</keyword>
<keyword id="KW-0862">Zinc</keyword>